<gene>
    <name type="primary">RAD54L</name>
    <name type="synonym">RAD54</name>
</gene>
<accession>O12944</accession>
<proteinExistence type="evidence at transcript level"/>
<protein>
    <recommendedName>
        <fullName>DNA repair and recombination protein RAD54-like</fullName>
        <ecNumber>3.6.4.-</ecNumber>
    </recommendedName>
    <alternativeName>
        <fullName>Putative recombination factor GdRad54</fullName>
    </alternativeName>
    <alternativeName>
        <fullName>RAD54 homolog</fullName>
    </alternativeName>
</protein>
<evidence type="ECO:0000250" key="1">
    <source>
        <dbReference type="UniProtKB" id="P32863"/>
    </source>
</evidence>
<evidence type="ECO:0000250" key="2">
    <source>
        <dbReference type="UniProtKB" id="Q7ZV09"/>
    </source>
</evidence>
<evidence type="ECO:0000250" key="3">
    <source>
        <dbReference type="UniProtKB" id="Q92698"/>
    </source>
</evidence>
<evidence type="ECO:0000255" key="4">
    <source>
        <dbReference type="PROSITE-ProRule" id="PRU00541"/>
    </source>
</evidence>
<evidence type="ECO:0000255" key="5">
    <source>
        <dbReference type="PROSITE-ProRule" id="PRU00542"/>
    </source>
</evidence>
<evidence type="ECO:0000256" key="6">
    <source>
        <dbReference type="SAM" id="MobiDB-lite"/>
    </source>
</evidence>
<evidence type="ECO:0000269" key="7">
    <source>
    </source>
</evidence>
<evidence type="ECO:0000305" key="8"/>
<organism>
    <name type="scientific">Gallus gallus</name>
    <name type="common">Chicken</name>
    <dbReference type="NCBI Taxonomy" id="9031"/>
    <lineage>
        <taxon>Eukaryota</taxon>
        <taxon>Metazoa</taxon>
        <taxon>Chordata</taxon>
        <taxon>Craniata</taxon>
        <taxon>Vertebrata</taxon>
        <taxon>Euteleostomi</taxon>
        <taxon>Archelosauria</taxon>
        <taxon>Archosauria</taxon>
        <taxon>Dinosauria</taxon>
        <taxon>Saurischia</taxon>
        <taxon>Theropoda</taxon>
        <taxon>Coelurosauria</taxon>
        <taxon>Aves</taxon>
        <taxon>Neognathae</taxon>
        <taxon>Galloanserae</taxon>
        <taxon>Galliformes</taxon>
        <taxon>Phasianidae</taxon>
        <taxon>Phasianinae</taxon>
        <taxon>Gallus</taxon>
    </lineage>
</organism>
<feature type="chain" id="PRO_0000074339" description="DNA repair and recombination protein RAD54-like">
    <location>
        <begin position="1" status="less than"/>
        <end position="733"/>
    </location>
</feature>
<feature type="domain" description="Helicase ATP-binding" evidence="4">
    <location>
        <begin position="159"/>
        <end position="334"/>
    </location>
</feature>
<feature type="domain" description="Helicase C-terminal" evidence="5">
    <location>
        <begin position="488"/>
        <end position="642"/>
    </location>
</feature>
<feature type="region of interest" description="Disordered" evidence="6">
    <location>
        <begin position="1"/>
        <end position="35"/>
    </location>
</feature>
<feature type="short sequence motif" description="DEGH box">
    <location>
        <begin position="285"/>
        <end position="288"/>
    </location>
</feature>
<feature type="binding site" evidence="4">
    <location>
        <begin position="172"/>
        <end position="179"/>
    </location>
    <ligand>
        <name>ATP</name>
        <dbReference type="ChEBI" id="CHEBI:30616"/>
    </ligand>
</feature>
<feature type="modified residue" description="N6-acetyllysine" evidence="3">
    <location>
        <position position="504"/>
    </location>
</feature>
<feature type="modified residue" description="Phosphoserine; by NEK1" evidence="3">
    <location>
        <position position="561"/>
    </location>
</feature>
<feature type="non-terminal residue">
    <location>
        <position position="1"/>
    </location>
</feature>
<reference key="1">
    <citation type="journal article" date="1997" name="Cell">
        <title>Reduced X-ray resistance and homologous recombination frequencies in a RAD54-/- mutant of the chicken DT40 cell line.</title>
        <authorList>
            <person name="Bezzubova O.Y."/>
            <person name="Silbergleit A."/>
            <person name="Yamaguchi-Iwai Y."/>
            <person name="Takeda S."/>
            <person name="Buerstedde J.-M."/>
        </authorList>
    </citation>
    <scope>NUCLEOTIDE SEQUENCE [MRNA]</scope>
    <scope>TISSUE SPECIFICITY</scope>
    <source>
        <tissue>Bursa of Fabricius</tissue>
        <tissue>Testis</tissue>
    </source>
</reference>
<comment type="function">
    <text evidence="1">Plays an essential role in homologous recombination (HR) which is a major pathway for repairing DNA double-strand breaks (DSBs), single-stranded DNA (ssDNA) gaps, and stalled or collapsed replication forks. Acts as a molecular motor during the homology search and guides RAD51 ssDNA along a donor dsDNA thereby changing the homology search from the diffusion-based mechanism to a motor-guided mechanism. Plays also an essential role in RAD51-mediated synaptic complex formation which consists of three strands encased in a protein filament formed once homology is recognized. Once DNA strand exchange occured, dissociates RAD51 from nucleoprotein filaments formed on dsDNA.</text>
</comment>
<comment type="subunit">
    <text evidence="1 2">Homohexamer (By similarity). Interacts (via N-terminus) with RAD51 (By similarity). Interacts with NAP1L1 (By similarity). Interacts with BRD9; this interaction orchestrates RAD51-RAD54 complex formation (By similarity).</text>
</comment>
<comment type="subcellular location">
    <subcellularLocation>
        <location evidence="8">Nucleus</location>
    </subcellularLocation>
</comment>
<comment type="tissue specificity">
    <text evidence="7">Highly expressed in bursa, thymus, testis, and ovary. Low level of expression seen in all other organs tested.</text>
</comment>
<comment type="PTM">
    <text evidence="3">Acetylated. Acetylation promotes interaction with BRD9, and subsequently with RAD54, which is essential for homologous recombination (HR).</text>
</comment>
<comment type="PTM">
    <text evidence="3">Phosphorylated. Phosphorylation at Ser-561 by NEK1 specifically in G2 phase allows efficient removal of RAD51 filaments from DNA.</text>
</comment>
<comment type="similarity">
    <text evidence="8">Belongs to the SNF2/RAD54 helicase family.</text>
</comment>
<name>RAD54_CHICK</name>
<sequence length="733" mass="82765">LAKRKAGGEEEDGEWRPPATQKRQKAGSEAESADCYRSPFRKPLTQLTNRPLCLDSSQHEAFIRSILSKPFKVPIPNYKGPTGLRALGIKRAGLRSPLHDPFEEGALVLYEPPLLSAHEQLKIDKDKVPVHVVVDPVLSRVLRPHQREGVKFLWDCVTSRRIPGSHGCIMADEMGLGKTLQCITLMWTLLRQSPDCKPEIEKAMVVSPSSLVRNWYNEVEKWLGGRIQPLAIDGGSKEEIDRKLVGSMNQRGLRVPSPILIISYETFRLHAEALQKGSVGLVICDEGHRLKNSENQTYQALNSLNTPRRVLISGTPIQNDLLEYFSLVHFVNSGILGTAQEFKRHFELPILKGRDADASEAERQKGEERLKELISIVNRCLIRRTSDILSKYLPVKIEQVVCCRLTPLQAELYKNFLKQAKPVEELKEGKINVSSLSSITSLKKLCNHPALIYDKCVEEEEGFMGALDLFPAGYSTKSVEPQLSGKMLVLDYILAVTKSTSNDKVVLVSNYTQTLDLFEKLCRNRRYLYVRLDGTMSIKKRAKVVERFNSPSSPEFIFMLSSKAGGCGLNLIGANRLVMFDPDWNPANDEQAMARVWRDGQKKTCYIYRLLSTGTIEEKIFQRQTHKKALSSCVVDEEQDVERHFSLGELKELFSLNETTISDTHDKIKCRRCVNGHQVRPPPEGSDCTSDLSQWNHCADKRGLQDSVLKAAWDAAVTFTFHHHSHEEQRGIP</sequence>
<dbReference type="EC" id="3.6.4.-"/>
<dbReference type="EMBL" id="U92461">
    <property type="protein sequence ID" value="AAB54115.1"/>
    <property type="molecule type" value="mRNA"/>
</dbReference>
<dbReference type="RefSeq" id="NP_001292075.1">
    <property type="nucleotide sequence ID" value="NM_001305146.1"/>
</dbReference>
<dbReference type="SMR" id="O12944"/>
<dbReference type="FunCoup" id="O12944">
    <property type="interactions" value="1742"/>
</dbReference>
<dbReference type="STRING" id="9031.ENSGALP00000037559"/>
<dbReference type="PaxDb" id="9031-ENSGALP00000037559"/>
<dbReference type="GeneID" id="424611"/>
<dbReference type="KEGG" id="gga:424611"/>
<dbReference type="CTD" id="8438"/>
<dbReference type="VEuPathDB" id="HostDB:geneid_424611"/>
<dbReference type="eggNOG" id="KOG0390">
    <property type="taxonomic scope" value="Eukaryota"/>
</dbReference>
<dbReference type="InParanoid" id="O12944"/>
<dbReference type="OrthoDB" id="413460at2759"/>
<dbReference type="PhylomeDB" id="O12944"/>
<dbReference type="Proteomes" id="UP000000539">
    <property type="component" value="Unassembled WGS sequence"/>
</dbReference>
<dbReference type="GO" id="GO:0005634">
    <property type="term" value="C:nucleus"/>
    <property type="evidence" value="ECO:0000318"/>
    <property type="project" value="GO_Central"/>
</dbReference>
<dbReference type="GO" id="GO:0005524">
    <property type="term" value="F:ATP binding"/>
    <property type="evidence" value="ECO:0007669"/>
    <property type="project" value="UniProtKB-KW"/>
</dbReference>
<dbReference type="GO" id="GO:0036310">
    <property type="term" value="F:ATP-dependent DNA/DNA annealing activity"/>
    <property type="evidence" value="ECO:0000250"/>
    <property type="project" value="UniProtKB"/>
</dbReference>
<dbReference type="GO" id="GO:0015616">
    <property type="term" value="F:DNA translocase activity"/>
    <property type="evidence" value="ECO:0000318"/>
    <property type="project" value="GO_Central"/>
</dbReference>
<dbReference type="GO" id="GO:0004386">
    <property type="term" value="F:helicase activity"/>
    <property type="evidence" value="ECO:0007669"/>
    <property type="project" value="UniProtKB-KW"/>
</dbReference>
<dbReference type="GO" id="GO:0016787">
    <property type="term" value="F:hydrolase activity"/>
    <property type="evidence" value="ECO:0007669"/>
    <property type="project" value="UniProtKB-KW"/>
</dbReference>
<dbReference type="GO" id="GO:0046872">
    <property type="term" value="F:metal ion binding"/>
    <property type="evidence" value="ECO:0007669"/>
    <property type="project" value="UniProtKB-KW"/>
</dbReference>
<dbReference type="GO" id="GO:0045003">
    <property type="term" value="P:double-strand break repair via synthesis-dependent strand annealing"/>
    <property type="evidence" value="ECO:0000318"/>
    <property type="project" value="GO_Central"/>
</dbReference>
<dbReference type="GO" id="GO:0007131">
    <property type="term" value="P:reciprocal meiotic recombination"/>
    <property type="evidence" value="ECO:0000318"/>
    <property type="project" value="GO_Central"/>
</dbReference>
<dbReference type="CDD" id="cd18067">
    <property type="entry name" value="DEXHc_RAD54A"/>
    <property type="match status" value="1"/>
</dbReference>
<dbReference type="CDD" id="cd18793">
    <property type="entry name" value="SF2_C_SNF"/>
    <property type="match status" value="1"/>
</dbReference>
<dbReference type="FunFam" id="1.20.120.850:FF:000002">
    <property type="entry name" value="DNA repair and recombination protein RAD54-like"/>
    <property type="match status" value="1"/>
</dbReference>
<dbReference type="FunFam" id="3.40.50.10810:FF:000010">
    <property type="entry name" value="DNA repair and recombination protein RAD54-like"/>
    <property type="match status" value="1"/>
</dbReference>
<dbReference type="FunFam" id="3.40.50.300:FF:000332">
    <property type="entry name" value="DNA repair and recombination protein RAD54-like"/>
    <property type="match status" value="1"/>
</dbReference>
<dbReference type="Gene3D" id="3.40.50.300">
    <property type="entry name" value="P-loop containing nucleotide triphosphate hydrolases"/>
    <property type="match status" value="1"/>
</dbReference>
<dbReference type="Gene3D" id="1.20.120.850">
    <property type="entry name" value="SWI2/SNF2 ATPases, N-terminal domain"/>
    <property type="match status" value="1"/>
</dbReference>
<dbReference type="Gene3D" id="3.40.50.10810">
    <property type="entry name" value="Tandem AAA-ATPase domain"/>
    <property type="match status" value="1"/>
</dbReference>
<dbReference type="InterPro" id="IPR014001">
    <property type="entry name" value="Helicase_ATP-bd"/>
</dbReference>
<dbReference type="InterPro" id="IPR001650">
    <property type="entry name" value="Helicase_C-like"/>
</dbReference>
<dbReference type="InterPro" id="IPR027417">
    <property type="entry name" value="P-loop_NTPase"/>
</dbReference>
<dbReference type="InterPro" id="IPR038718">
    <property type="entry name" value="SNF2-like_sf"/>
</dbReference>
<dbReference type="InterPro" id="IPR049730">
    <property type="entry name" value="SNF2/RAD54-like_C"/>
</dbReference>
<dbReference type="InterPro" id="IPR000330">
    <property type="entry name" value="SNF2_N"/>
</dbReference>
<dbReference type="InterPro" id="IPR050496">
    <property type="entry name" value="SNF2_RAD54_helicase_repair"/>
</dbReference>
<dbReference type="PANTHER" id="PTHR45629:SF7">
    <property type="entry name" value="DNA EXCISION REPAIR PROTEIN ERCC-6-RELATED"/>
    <property type="match status" value="1"/>
</dbReference>
<dbReference type="PANTHER" id="PTHR45629">
    <property type="entry name" value="SNF2/RAD54 FAMILY MEMBER"/>
    <property type="match status" value="1"/>
</dbReference>
<dbReference type="Pfam" id="PF00271">
    <property type="entry name" value="Helicase_C"/>
    <property type="match status" value="1"/>
</dbReference>
<dbReference type="Pfam" id="PF00176">
    <property type="entry name" value="SNF2-rel_dom"/>
    <property type="match status" value="1"/>
</dbReference>
<dbReference type="SMART" id="SM00487">
    <property type="entry name" value="DEXDc"/>
    <property type="match status" value="1"/>
</dbReference>
<dbReference type="SMART" id="SM00490">
    <property type="entry name" value="HELICc"/>
    <property type="match status" value="1"/>
</dbReference>
<dbReference type="SUPFAM" id="SSF52540">
    <property type="entry name" value="P-loop containing nucleoside triphosphate hydrolases"/>
    <property type="match status" value="2"/>
</dbReference>
<dbReference type="PROSITE" id="PS51192">
    <property type="entry name" value="HELICASE_ATP_BIND_1"/>
    <property type="match status" value="1"/>
</dbReference>
<dbReference type="PROSITE" id="PS51194">
    <property type="entry name" value="HELICASE_CTER"/>
    <property type="match status" value="1"/>
</dbReference>
<keyword id="KW-0007">Acetylation</keyword>
<keyword id="KW-0067">ATP-binding</keyword>
<keyword id="KW-0227">DNA damage</keyword>
<keyword id="KW-0234">DNA repair</keyword>
<keyword id="KW-0238">DNA-binding</keyword>
<keyword id="KW-0347">Helicase</keyword>
<keyword id="KW-0378">Hydrolase</keyword>
<keyword id="KW-0479">Metal-binding</keyword>
<keyword id="KW-0547">Nucleotide-binding</keyword>
<keyword id="KW-0539">Nucleus</keyword>
<keyword id="KW-0597">Phosphoprotein</keyword>
<keyword id="KW-1185">Reference proteome</keyword>
<keyword id="KW-0862">Zinc</keyword>